<sequence>MQKKSIELKSNNFTLLVLYLNNQNIDLINQSLYKKIQECPKFFKNAPIIVNVSKLCNTVDWKKIKKIIISHGFFVVGVSGCQDGILKKNIIDSGLPILSERKNNKSNIITNFFINSYKNKKKETINKVEKTHIIDIPVRSGQKIYAKHADLIVINNVSAGAELVADGNIHVYGIVRGRVLAGANGDTSRKIFCTGLFAELVSISGEYWLSDQIPSEFIGKSAQIYLKNKFLTINSLS</sequence>
<name>MINC_BUCAI</name>
<organism>
    <name type="scientific">Buchnera aphidicola subsp. Acyrthosiphon pisum (strain APS)</name>
    <name type="common">Acyrthosiphon pisum symbiotic bacterium</name>
    <dbReference type="NCBI Taxonomy" id="107806"/>
    <lineage>
        <taxon>Bacteria</taxon>
        <taxon>Pseudomonadati</taxon>
        <taxon>Pseudomonadota</taxon>
        <taxon>Gammaproteobacteria</taxon>
        <taxon>Enterobacterales</taxon>
        <taxon>Erwiniaceae</taxon>
        <taxon>Buchnera</taxon>
    </lineage>
</organism>
<reference key="1">
    <citation type="journal article" date="2000" name="Nature">
        <title>Genome sequence of the endocellular bacterial symbiont of aphids Buchnera sp. APS.</title>
        <authorList>
            <person name="Shigenobu S."/>
            <person name="Watanabe H."/>
            <person name="Hattori M."/>
            <person name="Sakaki Y."/>
            <person name="Ishikawa H."/>
        </authorList>
    </citation>
    <scope>NUCLEOTIDE SEQUENCE [LARGE SCALE GENOMIC DNA]</scope>
    <source>
        <strain>APS</strain>
    </source>
</reference>
<evidence type="ECO:0000250" key="1"/>
<evidence type="ECO:0000305" key="2"/>
<feature type="chain" id="PRO_0000189024" description="Probable septum site-determining protein MinC">
    <location>
        <begin position="1"/>
        <end position="237"/>
    </location>
</feature>
<comment type="function">
    <text evidence="1">Cell division inhibitor that blocks the formation of polar Z ring septums. Rapidly oscillates between the poles of the cell to destabilize FtsZ filaments that have formed before they mature into polar Z rings. Prevents FtsZ polymerization (By similarity).</text>
</comment>
<comment type="subunit">
    <text evidence="1">Interacts with MinD and FtsZ.</text>
</comment>
<comment type="similarity">
    <text evidence="2">Belongs to the MinC family.</text>
</comment>
<accession>P57412</accession>
<gene>
    <name type="primary">minC</name>
    <name type="ordered locus">BU327</name>
</gene>
<protein>
    <recommendedName>
        <fullName>Probable septum site-determining protein MinC</fullName>
    </recommendedName>
</protein>
<dbReference type="EMBL" id="BA000003">
    <property type="protein sequence ID" value="BAB13035.1"/>
    <property type="molecule type" value="Genomic_DNA"/>
</dbReference>
<dbReference type="RefSeq" id="NP_240149.1">
    <property type="nucleotide sequence ID" value="NC_002528.1"/>
</dbReference>
<dbReference type="RefSeq" id="WP_009874282.1">
    <property type="nucleotide sequence ID" value="NZ_AP036055.1"/>
</dbReference>
<dbReference type="SMR" id="P57412"/>
<dbReference type="STRING" id="563178.BUAP5A_320"/>
<dbReference type="EnsemblBacteria" id="BAB13035">
    <property type="protein sequence ID" value="BAB13035"/>
    <property type="gene ID" value="BAB13035"/>
</dbReference>
<dbReference type="KEGG" id="buc:BU327"/>
<dbReference type="PATRIC" id="fig|107806.10.peg.339"/>
<dbReference type="eggNOG" id="COG0850">
    <property type="taxonomic scope" value="Bacteria"/>
</dbReference>
<dbReference type="HOGENOM" id="CLU_067812_0_1_6"/>
<dbReference type="Proteomes" id="UP000001806">
    <property type="component" value="Chromosome"/>
</dbReference>
<dbReference type="GO" id="GO:0000902">
    <property type="term" value="P:cell morphogenesis"/>
    <property type="evidence" value="ECO:0007669"/>
    <property type="project" value="InterPro"/>
</dbReference>
<dbReference type="GO" id="GO:0000917">
    <property type="term" value="P:division septum assembly"/>
    <property type="evidence" value="ECO:0007669"/>
    <property type="project" value="UniProtKB-KW"/>
</dbReference>
<dbReference type="GO" id="GO:0051302">
    <property type="term" value="P:regulation of cell division"/>
    <property type="evidence" value="ECO:0007669"/>
    <property type="project" value="InterPro"/>
</dbReference>
<dbReference type="GO" id="GO:1901891">
    <property type="term" value="P:regulation of cell septum assembly"/>
    <property type="evidence" value="ECO:0007669"/>
    <property type="project" value="InterPro"/>
</dbReference>
<dbReference type="Gene3D" id="2.160.20.70">
    <property type="match status" value="1"/>
</dbReference>
<dbReference type="Gene3D" id="3.30.70.260">
    <property type="match status" value="1"/>
</dbReference>
<dbReference type="HAMAP" id="MF_00267">
    <property type="entry name" value="MinC"/>
    <property type="match status" value="1"/>
</dbReference>
<dbReference type="InterPro" id="IPR016098">
    <property type="entry name" value="CAP/MinC_C"/>
</dbReference>
<dbReference type="InterPro" id="IPR013033">
    <property type="entry name" value="MinC"/>
</dbReference>
<dbReference type="InterPro" id="IPR036145">
    <property type="entry name" value="MinC_C_sf"/>
</dbReference>
<dbReference type="InterPro" id="IPR007874">
    <property type="entry name" value="MinC_N"/>
</dbReference>
<dbReference type="InterPro" id="IPR005526">
    <property type="entry name" value="Septum_form_inhib_MinC_C"/>
</dbReference>
<dbReference type="NCBIfam" id="TIGR01222">
    <property type="entry name" value="minC"/>
    <property type="match status" value="1"/>
</dbReference>
<dbReference type="PANTHER" id="PTHR34108">
    <property type="entry name" value="SEPTUM SITE-DETERMINING PROTEIN MINC"/>
    <property type="match status" value="1"/>
</dbReference>
<dbReference type="PANTHER" id="PTHR34108:SF1">
    <property type="entry name" value="SEPTUM SITE-DETERMINING PROTEIN MINC"/>
    <property type="match status" value="1"/>
</dbReference>
<dbReference type="Pfam" id="PF03775">
    <property type="entry name" value="MinC_C"/>
    <property type="match status" value="1"/>
</dbReference>
<dbReference type="Pfam" id="PF05209">
    <property type="entry name" value="MinC_N"/>
    <property type="match status" value="1"/>
</dbReference>
<dbReference type="SUPFAM" id="SSF63848">
    <property type="entry name" value="Cell-division inhibitor MinC, C-terminal domain"/>
    <property type="match status" value="1"/>
</dbReference>
<keyword id="KW-0131">Cell cycle</keyword>
<keyword id="KW-0132">Cell division</keyword>
<keyword id="KW-1185">Reference proteome</keyword>
<keyword id="KW-0717">Septation</keyword>
<proteinExistence type="inferred from homology"/>